<dbReference type="EC" id="5.4.99.12" evidence="1"/>
<dbReference type="EMBL" id="CP001489">
    <property type="protein sequence ID" value="ACO02805.1"/>
    <property type="molecule type" value="Genomic_DNA"/>
</dbReference>
<dbReference type="RefSeq" id="WP_002965618.1">
    <property type="nucleotide sequence ID" value="NC_012442.1"/>
</dbReference>
<dbReference type="SMR" id="C0RMH2"/>
<dbReference type="GeneID" id="97534918"/>
<dbReference type="KEGG" id="bmi:BMEA_B1018"/>
<dbReference type="HOGENOM" id="CLU_014673_0_2_5"/>
<dbReference type="Proteomes" id="UP000001748">
    <property type="component" value="Chromosome II"/>
</dbReference>
<dbReference type="GO" id="GO:0003723">
    <property type="term" value="F:RNA binding"/>
    <property type="evidence" value="ECO:0007669"/>
    <property type="project" value="InterPro"/>
</dbReference>
<dbReference type="GO" id="GO:0160147">
    <property type="term" value="F:tRNA pseudouridine(38-40) synthase activity"/>
    <property type="evidence" value="ECO:0007669"/>
    <property type="project" value="UniProtKB-EC"/>
</dbReference>
<dbReference type="GO" id="GO:0031119">
    <property type="term" value="P:tRNA pseudouridine synthesis"/>
    <property type="evidence" value="ECO:0007669"/>
    <property type="project" value="UniProtKB-UniRule"/>
</dbReference>
<dbReference type="CDD" id="cd02570">
    <property type="entry name" value="PseudoU_synth_EcTruA"/>
    <property type="match status" value="1"/>
</dbReference>
<dbReference type="FunFam" id="3.30.70.580:FF:000001">
    <property type="entry name" value="tRNA pseudouridine synthase A"/>
    <property type="match status" value="1"/>
</dbReference>
<dbReference type="Gene3D" id="3.30.70.660">
    <property type="entry name" value="Pseudouridine synthase I, catalytic domain, C-terminal subdomain"/>
    <property type="match status" value="1"/>
</dbReference>
<dbReference type="Gene3D" id="3.30.70.580">
    <property type="entry name" value="Pseudouridine synthase I, catalytic domain, N-terminal subdomain"/>
    <property type="match status" value="1"/>
</dbReference>
<dbReference type="HAMAP" id="MF_00171">
    <property type="entry name" value="TruA"/>
    <property type="match status" value="1"/>
</dbReference>
<dbReference type="InterPro" id="IPR020103">
    <property type="entry name" value="PsdUridine_synth_cat_dom_sf"/>
</dbReference>
<dbReference type="InterPro" id="IPR001406">
    <property type="entry name" value="PsdUridine_synth_TruA"/>
</dbReference>
<dbReference type="InterPro" id="IPR020097">
    <property type="entry name" value="PsdUridine_synth_TruA_a/b_dom"/>
</dbReference>
<dbReference type="InterPro" id="IPR020095">
    <property type="entry name" value="PsdUridine_synth_TruA_C"/>
</dbReference>
<dbReference type="InterPro" id="IPR020094">
    <property type="entry name" value="TruA/RsuA/RluB/E/F_N"/>
</dbReference>
<dbReference type="NCBIfam" id="TIGR00071">
    <property type="entry name" value="hisT_truA"/>
    <property type="match status" value="1"/>
</dbReference>
<dbReference type="PANTHER" id="PTHR11142">
    <property type="entry name" value="PSEUDOURIDYLATE SYNTHASE"/>
    <property type="match status" value="1"/>
</dbReference>
<dbReference type="PANTHER" id="PTHR11142:SF0">
    <property type="entry name" value="TRNA PSEUDOURIDINE SYNTHASE-LIKE 1"/>
    <property type="match status" value="1"/>
</dbReference>
<dbReference type="Pfam" id="PF01416">
    <property type="entry name" value="PseudoU_synth_1"/>
    <property type="match status" value="2"/>
</dbReference>
<dbReference type="PIRSF" id="PIRSF001430">
    <property type="entry name" value="tRNA_psdUrid_synth"/>
    <property type="match status" value="1"/>
</dbReference>
<dbReference type="SUPFAM" id="SSF55120">
    <property type="entry name" value="Pseudouridine synthase"/>
    <property type="match status" value="1"/>
</dbReference>
<name>TRUA_BRUMB</name>
<sequence length="251" mass="28172">MPRYKLTVEYDGTPYVGWQRQENGHAVQGAIEQAFKKFCGEDLTLSAAGRTDAGVHATAQVAHVDLAKDWGAGKVRDAVNAHLVMADERISILNVEKTTDTFDARFSARARHYLYRIHNRRAPLAVDYQRAWWVQKQLDADAMHEAAQRLLGEHDFTTFRATQCQAKSPVKTLDRLDVTRNGDMVEMRVSARSFLHNQVRSFAGSLMEVGVGRWTADDLQAALEARDRKACGQVAPPYGLYLVGVDYAFPF</sequence>
<reference key="1">
    <citation type="submission" date="2009-03" db="EMBL/GenBank/DDBJ databases">
        <title>Brucella melitensis ATCC 23457 whole genome shotgun sequencing project.</title>
        <authorList>
            <person name="Setubal J.C."/>
            <person name="Boyle S."/>
            <person name="Crasta O.R."/>
            <person name="Gillespie J.J."/>
            <person name="Kenyon R.W."/>
            <person name="Lu J."/>
            <person name="Mane S."/>
            <person name="Nagrani S."/>
            <person name="Shallom J.M."/>
            <person name="Shallom S."/>
            <person name="Shukla M."/>
            <person name="Snyder E.E."/>
            <person name="Sobral B.W."/>
            <person name="Wattam A.R."/>
            <person name="Will R."/>
            <person name="Williams K."/>
            <person name="Yoo H."/>
            <person name="Munk C."/>
            <person name="Tapia R."/>
            <person name="Han C."/>
            <person name="Detter J.C."/>
            <person name="Bruce D."/>
            <person name="Brettin T.S."/>
        </authorList>
    </citation>
    <scope>NUCLEOTIDE SEQUENCE [LARGE SCALE GENOMIC DNA]</scope>
    <source>
        <strain>ATCC 23457</strain>
    </source>
</reference>
<feature type="chain" id="PRO_1000194534" description="tRNA pseudouridine synthase A">
    <location>
        <begin position="1"/>
        <end position="251"/>
    </location>
</feature>
<feature type="active site" description="Nucleophile" evidence="1">
    <location>
        <position position="52"/>
    </location>
</feature>
<feature type="binding site" evidence="1">
    <location>
        <position position="113"/>
    </location>
    <ligand>
        <name>substrate</name>
    </ligand>
</feature>
<protein>
    <recommendedName>
        <fullName evidence="1">tRNA pseudouridine synthase A</fullName>
        <ecNumber evidence="1">5.4.99.12</ecNumber>
    </recommendedName>
    <alternativeName>
        <fullName evidence="1">tRNA pseudouridine(38-40) synthase</fullName>
    </alternativeName>
    <alternativeName>
        <fullName evidence="1">tRNA pseudouridylate synthase I</fullName>
    </alternativeName>
    <alternativeName>
        <fullName evidence="1">tRNA-uridine isomerase I</fullName>
    </alternativeName>
</protein>
<gene>
    <name evidence="1" type="primary">truA</name>
    <name type="ordered locus">BMEA_B1018</name>
</gene>
<organism>
    <name type="scientific">Brucella melitensis biotype 2 (strain ATCC 23457)</name>
    <dbReference type="NCBI Taxonomy" id="546272"/>
    <lineage>
        <taxon>Bacteria</taxon>
        <taxon>Pseudomonadati</taxon>
        <taxon>Pseudomonadota</taxon>
        <taxon>Alphaproteobacteria</taxon>
        <taxon>Hyphomicrobiales</taxon>
        <taxon>Brucellaceae</taxon>
        <taxon>Brucella/Ochrobactrum group</taxon>
        <taxon>Brucella</taxon>
    </lineage>
</organism>
<keyword id="KW-0413">Isomerase</keyword>
<keyword id="KW-0819">tRNA processing</keyword>
<accession>C0RMH2</accession>
<comment type="function">
    <text evidence="1">Formation of pseudouridine at positions 38, 39 and 40 in the anticodon stem and loop of transfer RNAs.</text>
</comment>
<comment type="catalytic activity">
    <reaction evidence="1">
        <text>uridine(38/39/40) in tRNA = pseudouridine(38/39/40) in tRNA</text>
        <dbReference type="Rhea" id="RHEA:22376"/>
        <dbReference type="Rhea" id="RHEA-COMP:10085"/>
        <dbReference type="Rhea" id="RHEA-COMP:10087"/>
        <dbReference type="ChEBI" id="CHEBI:65314"/>
        <dbReference type="ChEBI" id="CHEBI:65315"/>
        <dbReference type="EC" id="5.4.99.12"/>
    </reaction>
</comment>
<comment type="subunit">
    <text evidence="1">Homodimer.</text>
</comment>
<comment type="similarity">
    <text evidence="1">Belongs to the tRNA pseudouridine synthase TruA family.</text>
</comment>
<proteinExistence type="inferred from homology"/>
<evidence type="ECO:0000255" key="1">
    <source>
        <dbReference type="HAMAP-Rule" id="MF_00171"/>
    </source>
</evidence>